<dbReference type="EC" id="2.4.2.18" evidence="1"/>
<dbReference type="EMBL" id="CP000240">
    <property type="protein sequence ID" value="ABD01051.1"/>
    <property type="molecule type" value="Genomic_DNA"/>
</dbReference>
<dbReference type="RefSeq" id="WP_011431722.1">
    <property type="nucleotide sequence ID" value="NC_007776.1"/>
</dbReference>
<dbReference type="SMR" id="Q2JQ65"/>
<dbReference type="STRING" id="321332.CYB_0050"/>
<dbReference type="KEGG" id="cyb:CYB_0050"/>
<dbReference type="eggNOG" id="COG0547">
    <property type="taxonomic scope" value="Bacteria"/>
</dbReference>
<dbReference type="HOGENOM" id="CLU_034315_2_1_3"/>
<dbReference type="OrthoDB" id="9806430at2"/>
<dbReference type="UniPathway" id="UPA00035">
    <property type="reaction ID" value="UER00041"/>
</dbReference>
<dbReference type="Proteomes" id="UP000001938">
    <property type="component" value="Chromosome"/>
</dbReference>
<dbReference type="GO" id="GO:0005829">
    <property type="term" value="C:cytosol"/>
    <property type="evidence" value="ECO:0007669"/>
    <property type="project" value="TreeGrafter"/>
</dbReference>
<dbReference type="GO" id="GO:0004048">
    <property type="term" value="F:anthranilate phosphoribosyltransferase activity"/>
    <property type="evidence" value="ECO:0007669"/>
    <property type="project" value="UniProtKB-UniRule"/>
</dbReference>
<dbReference type="GO" id="GO:0000287">
    <property type="term" value="F:magnesium ion binding"/>
    <property type="evidence" value="ECO:0007669"/>
    <property type="project" value="UniProtKB-UniRule"/>
</dbReference>
<dbReference type="GO" id="GO:0000162">
    <property type="term" value="P:L-tryptophan biosynthetic process"/>
    <property type="evidence" value="ECO:0007669"/>
    <property type="project" value="UniProtKB-UniRule"/>
</dbReference>
<dbReference type="FunFam" id="3.40.1030.10:FF:000002">
    <property type="entry name" value="Anthranilate phosphoribosyltransferase"/>
    <property type="match status" value="1"/>
</dbReference>
<dbReference type="Gene3D" id="3.40.1030.10">
    <property type="entry name" value="Nucleoside phosphorylase/phosphoribosyltransferase catalytic domain"/>
    <property type="match status" value="1"/>
</dbReference>
<dbReference type="Gene3D" id="1.20.970.10">
    <property type="entry name" value="Transferase, Pyrimidine Nucleoside Phosphorylase, Chain C"/>
    <property type="match status" value="1"/>
</dbReference>
<dbReference type="HAMAP" id="MF_00211">
    <property type="entry name" value="TrpD"/>
    <property type="match status" value="1"/>
</dbReference>
<dbReference type="InterPro" id="IPR005940">
    <property type="entry name" value="Anthranilate_Pribosyl_Tfrase"/>
</dbReference>
<dbReference type="InterPro" id="IPR000312">
    <property type="entry name" value="Glycosyl_Trfase_fam3"/>
</dbReference>
<dbReference type="InterPro" id="IPR017459">
    <property type="entry name" value="Glycosyl_Trfase_fam3_N_dom"/>
</dbReference>
<dbReference type="InterPro" id="IPR036320">
    <property type="entry name" value="Glycosyl_Trfase_fam3_N_dom_sf"/>
</dbReference>
<dbReference type="InterPro" id="IPR035902">
    <property type="entry name" value="Nuc_phospho_transferase"/>
</dbReference>
<dbReference type="NCBIfam" id="TIGR01245">
    <property type="entry name" value="trpD"/>
    <property type="match status" value="1"/>
</dbReference>
<dbReference type="PANTHER" id="PTHR43285">
    <property type="entry name" value="ANTHRANILATE PHOSPHORIBOSYLTRANSFERASE"/>
    <property type="match status" value="1"/>
</dbReference>
<dbReference type="PANTHER" id="PTHR43285:SF2">
    <property type="entry name" value="ANTHRANILATE PHOSPHORIBOSYLTRANSFERASE"/>
    <property type="match status" value="1"/>
</dbReference>
<dbReference type="Pfam" id="PF02885">
    <property type="entry name" value="Glycos_trans_3N"/>
    <property type="match status" value="1"/>
</dbReference>
<dbReference type="Pfam" id="PF00591">
    <property type="entry name" value="Glycos_transf_3"/>
    <property type="match status" value="1"/>
</dbReference>
<dbReference type="SUPFAM" id="SSF52418">
    <property type="entry name" value="Nucleoside phosphorylase/phosphoribosyltransferase catalytic domain"/>
    <property type="match status" value="1"/>
</dbReference>
<dbReference type="SUPFAM" id="SSF47648">
    <property type="entry name" value="Nucleoside phosphorylase/phosphoribosyltransferase N-terminal domain"/>
    <property type="match status" value="1"/>
</dbReference>
<comment type="function">
    <text evidence="1">Catalyzes the transfer of the phosphoribosyl group of 5-phosphorylribose-1-pyrophosphate (PRPP) to anthranilate to yield N-(5'-phosphoribosyl)-anthranilate (PRA).</text>
</comment>
<comment type="catalytic activity">
    <reaction evidence="1">
        <text>N-(5-phospho-beta-D-ribosyl)anthranilate + diphosphate = 5-phospho-alpha-D-ribose 1-diphosphate + anthranilate</text>
        <dbReference type="Rhea" id="RHEA:11768"/>
        <dbReference type="ChEBI" id="CHEBI:16567"/>
        <dbReference type="ChEBI" id="CHEBI:18277"/>
        <dbReference type="ChEBI" id="CHEBI:33019"/>
        <dbReference type="ChEBI" id="CHEBI:58017"/>
        <dbReference type="EC" id="2.4.2.18"/>
    </reaction>
</comment>
<comment type="cofactor">
    <cofactor evidence="1">
        <name>Mg(2+)</name>
        <dbReference type="ChEBI" id="CHEBI:18420"/>
    </cofactor>
    <text evidence="1">Binds 2 magnesium ions per monomer.</text>
</comment>
<comment type="pathway">
    <text evidence="1">Amino-acid biosynthesis; L-tryptophan biosynthesis; L-tryptophan from chorismate: step 2/5.</text>
</comment>
<comment type="subunit">
    <text evidence="1">Homodimer.</text>
</comment>
<comment type="similarity">
    <text evidence="1">Belongs to the anthranilate phosphoribosyltransferase family.</text>
</comment>
<feature type="chain" id="PRO_0000325470" description="Anthranilate phosphoribosyltransferase">
    <location>
        <begin position="1"/>
        <end position="343"/>
    </location>
</feature>
<feature type="binding site" evidence="1">
    <location>
        <position position="86"/>
    </location>
    <ligand>
        <name>5-phospho-alpha-D-ribose 1-diphosphate</name>
        <dbReference type="ChEBI" id="CHEBI:58017"/>
    </ligand>
</feature>
<feature type="binding site" evidence="1">
    <location>
        <position position="86"/>
    </location>
    <ligand>
        <name>anthranilate</name>
        <dbReference type="ChEBI" id="CHEBI:16567"/>
        <label>1</label>
    </ligand>
</feature>
<feature type="binding site" evidence="1">
    <location>
        <begin position="89"/>
        <end position="90"/>
    </location>
    <ligand>
        <name>5-phospho-alpha-D-ribose 1-diphosphate</name>
        <dbReference type="ChEBI" id="CHEBI:58017"/>
    </ligand>
</feature>
<feature type="binding site" evidence="1">
    <location>
        <position position="94"/>
    </location>
    <ligand>
        <name>5-phospho-alpha-D-ribose 1-diphosphate</name>
        <dbReference type="ChEBI" id="CHEBI:58017"/>
    </ligand>
</feature>
<feature type="binding site" evidence="1">
    <location>
        <begin position="96"/>
        <end position="99"/>
    </location>
    <ligand>
        <name>5-phospho-alpha-D-ribose 1-diphosphate</name>
        <dbReference type="ChEBI" id="CHEBI:58017"/>
    </ligand>
</feature>
<feature type="binding site" evidence="1">
    <location>
        <position position="98"/>
    </location>
    <ligand>
        <name>Mg(2+)</name>
        <dbReference type="ChEBI" id="CHEBI:18420"/>
        <label>1</label>
    </ligand>
</feature>
<feature type="binding site" evidence="1">
    <location>
        <begin position="114"/>
        <end position="122"/>
    </location>
    <ligand>
        <name>5-phospho-alpha-D-ribose 1-diphosphate</name>
        <dbReference type="ChEBI" id="CHEBI:58017"/>
    </ligand>
</feature>
<feature type="binding site" evidence="1">
    <location>
        <position position="117"/>
    </location>
    <ligand>
        <name>anthranilate</name>
        <dbReference type="ChEBI" id="CHEBI:16567"/>
        <label>1</label>
    </ligand>
</feature>
<feature type="binding site" evidence="1">
    <location>
        <position position="126"/>
    </location>
    <ligand>
        <name>5-phospho-alpha-D-ribose 1-diphosphate</name>
        <dbReference type="ChEBI" id="CHEBI:58017"/>
    </ligand>
</feature>
<feature type="binding site" evidence="1">
    <location>
        <position position="172"/>
    </location>
    <ligand>
        <name>anthranilate</name>
        <dbReference type="ChEBI" id="CHEBI:16567"/>
        <label>2</label>
    </ligand>
</feature>
<feature type="binding site" evidence="1">
    <location>
        <position position="231"/>
    </location>
    <ligand>
        <name>Mg(2+)</name>
        <dbReference type="ChEBI" id="CHEBI:18420"/>
        <label>2</label>
    </ligand>
</feature>
<feature type="binding site" evidence="1">
    <location>
        <position position="232"/>
    </location>
    <ligand>
        <name>Mg(2+)</name>
        <dbReference type="ChEBI" id="CHEBI:18420"/>
        <label>1</label>
    </ligand>
</feature>
<feature type="binding site" evidence="1">
    <location>
        <position position="232"/>
    </location>
    <ligand>
        <name>Mg(2+)</name>
        <dbReference type="ChEBI" id="CHEBI:18420"/>
        <label>2</label>
    </ligand>
</feature>
<evidence type="ECO:0000255" key="1">
    <source>
        <dbReference type="HAMAP-Rule" id="MF_00211"/>
    </source>
</evidence>
<protein>
    <recommendedName>
        <fullName evidence="1">Anthranilate phosphoribosyltransferase</fullName>
        <ecNumber evidence="1">2.4.2.18</ecNumber>
    </recommendedName>
</protein>
<gene>
    <name evidence="1" type="primary">trpD</name>
    <name type="ordered locus">CYB_0050</name>
</gene>
<sequence length="343" mass="35863">MTETADLWPQLLGQLLDRQSLSEAQAEQLMNGWLQNQVPDVVSGAILAALQAKGVSAGELAGMARVLQRASLGSPLDLSLLVDTCGTGGDGAGTFNISTAVAFVVSAAGIPVVKHGNRSASGKVGSADVLEALGVNLGAEPERVRAAVAEVGITFLFAPQWHPAMRAVIPYRRALKVRTIFNLLGPLVNPLYPNRQVIGVYAQELVPVMAEALRLLGREGAIVLHSREGLDEAGLDQPTDLGILSGGLVRTEVLNPADYELTLAPTQALKGGDVAENAAILTQVLQGSGTPAQQDVVALNAALALQVAGVAPDWRAGIAQAREILARGAAWDRLQQLVHFLKA</sequence>
<name>TRPD_SYNJB</name>
<accession>Q2JQ65</accession>
<keyword id="KW-0028">Amino-acid biosynthesis</keyword>
<keyword id="KW-0057">Aromatic amino acid biosynthesis</keyword>
<keyword id="KW-0328">Glycosyltransferase</keyword>
<keyword id="KW-0460">Magnesium</keyword>
<keyword id="KW-0479">Metal-binding</keyword>
<keyword id="KW-1185">Reference proteome</keyword>
<keyword id="KW-0808">Transferase</keyword>
<keyword id="KW-0822">Tryptophan biosynthesis</keyword>
<reference key="1">
    <citation type="journal article" date="2007" name="ISME J.">
        <title>Population level functional diversity in a microbial community revealed by comparative genomic and metagenomic analyses.</title>
        <authorList>
            <person name="Bhaya D."/>
            <person name="Grossman A.R."/>
            <person name="Steunou A.-S."/>
            <person name="Khuri N."/>
            <person name="Cohan F.M."/>
            <person name="Hamamura N."/>
            <person name="Melendrez M.C."/>
            <person name="Bateson M.M."/>
            <person name="Ward D.M."/>
            <person name="Heidelberg J.F."/>
        </authorList>
    </citation>
    <scope>NUCLEOTIDE SEQUENCE [LARGE SCALE GENOMIC DNA]</scope>
    <source>
        <strain>JA-2-3B'a(2-13)</strain>
    </source>
</reference>
<organism>
    <name type="scientific">Synechococcus sp. (strain JA-2-3B'a(2-13))</name>
    <name type="common">Cyanobacteria bacterium Yellowstone B-Prime</name>
    <dbReference type="NCBI Taxonomy" id="321332"/>
    <lineage>
        <taxon>Bacteria</taxon>
        <taxon>Bacillati</taxon>
        <taxon>Cyanobacteriota</taxon>
        <taxon>Cyanophyceae</taxon>
        <taxon>Synechococcales</taxon>
        <taxon>Synechococcaceae</taxon>
        <taxon>Synechococcus</taxon>
    </lineage>
</organism>
<proteinExistence type="inferred from homology"/>